<organism>
    <name type="scientific">Salmonella arizonae (strain ATCC BAA-731 / CDC346-86 / RSK2980)</name>
    <dbReference type="NCBI Taxonomy" id="41514"/>
    <lineage>
        <taxon>Bacteria</taxon>
        <taxon>Pseudomonadati</taxon>
        <taxon>Pseudomonadota</taxon>
        <taxon>Gammaproteobacteria</taxon>
        <taxon>Enterobacterales</taxon>
        <taxon>Enterobacteriaceae</taxon>
        <taxon>Salmonella</taxon>
    </lineage>
</organism>
<dbReference type="EMBL" id="CP000880">
    <property type="protein sequence ID" value="ABX20274.1"/>
    <property type="molecule type" value="Genomic_DNA"/>
</dbReference>
<dbReference type="SMR" id="A9MHJ6"/>
<dbReference type="STRING" id="41514.SARI_00335"/>
<dbReference type="KEGG" id="ses:SARI_00335"/>
<dbReference type="HOGENOM" id="CLU_069054_5_1_6"/>
<dbReference type="Proteomes" id="UP000002084">
    <property type="component" value="Chromosome"/>
</dbReference>
<dbReference type="GO" id="GO:0005829">
    <property type="term" value="C:cytosol"/>
    <property type="evidence" value="ECO:0007669"/>
    <property type="project" value="TreeGrafter"/>
</dbReference>
<dbReference type="GO" id="GO:0051537">
    <property type="term" value="F:2 iron, 2 sulfur cluster binding"/>
    <property type="evidence" value="ECO:0007669"/>
    <property type="project" value="TreeGrafter"/>
</dbReference>
<dbReference type="GO" id="GO:0005506">
    <property type="term" value="F:iron ion binding"/>
    <property type="evidence" value="ECO:0007669"/>
    <property type="project" value="UniProtKB-UniRule"/>
</dbReference>
<dbReference type="GO" id="GO:0016226">
    <property type="term" value="P:iron-sulfur cluster assembly"/>
    <property type="evidence" value="ECO:0007669"/>
    <property type="project" value="UniProtKB-UniRule"/>
</dbReference>
<dbReference type="FunFam" id="2.60.300.12:FF:000001">
    <property type="entry name" value="Iron-binding protein IscA"/>
    <property type="match status" value="1"/>
</dbReference>
<dbReference type="Gene3D" id="2.60.300.12">
    <property type="entry name" value="HesB-like domain"/>
    <property type="match status" value="1"/>
</dbReference>
<dbReference type="HAMAP" id="MF_01429">
    <property type="entry name" value="Fe_S_insert_IscA"/>
    <property type="match status" value="1"/>
</dbReference>
<dbReference type="InterPro" id="IPR050322">
    <property type="entry name" value="Fe-S_cluster_asmbl/transfer"/>
</dbReference>
<dbReference type="InterPro" id="IPR000361">
    <property type="entry name" value="FeS_biogenesis"/>
</dbReference>
<dbReference type="InterPro" id="IPR016092">
    <property type="entry name" value="FeS_cluster_insertion"/>
</dbReference>
<dbReference type="InterPro" id="IPR017870">
    <property type="entry name" value="FeS_cluster_insertion_CS"/>
</dbReference>
<dbReference type="InterPro" id="IPR035903">
    <property type="entry name" value="HesB-like_dom_sf"/>
</dbReference>
<dbReference type="InterPro" id="IPR011302">
    <property type="entry name" value="IscA_proteobacteria"/>
</dbReference>
<dbReference type="NCBIfam" id="TIGR00049">
    <property type="entry name" value="iron-sulfur cluster assembly accessory protein"/>
    <property type="match status" value="1"/>
</dbReference>
<dbReference type="NCBIfam" id="TIGR02011">
    <property type="entry name" value="IscA"/>
    <property type="match status" value="1"/>
</dbReference>
<dbReference type="NCBIfam" id="NF007049">
    <property type="entry name" value="PRK09502.1"/>
    <property type="match status" value="1"/>
</dbReference>
<dbReference type="PANTHER" id="PTHR10072:SF41">
    <property type="entry name" value="IRON-SULFUR CLUSTER ASSEMBLY 1 HOMOLOG, MITOCHONDRIAL"/>
    <property type="match status" value="1"/>
</dbReference>
<dbReference type="PANTHER" id="PTHR10072">
    <property type="entry name" value="IRON-SULFUR CLUSTER ASSEMBLY PROTEIN"/>
    <property type="match status" value="1"/>
</dbReference>
<dbReference type="Pfam" id="PF01521">
    <property type="entry name" value="Fe-S_biosyn"/>
    <property type="match status" value="1"/>
</dbReference>
<dbReference type="SUPFAM" id="SSF89360">
    <property type="entry name" value="HesB-like domain"/>
    <property type="match status" value="1"/>
</dbReference>
<dbReference type="PROSITE" id="PS01152">
    <property type="entry name" value="HESB"/>
    <property type="match status" value="1"/>
</dbReference>
<accession>A9MHJ6</accession>
<comment type="function">
    <text evidence="1">Is able to transfer iron-sulfur clusters to apo-ferredoxin. Multiple cycles of [2Fe2S] cluster formation and transfer are observed, suggesting that IscA acts catalytically. Recruits intracellular free iron so as to provide iron for the assembly of transient iron-sulfur cluster in IscU in the presence of IscS, L-cysteine and the thioredoxin reductase system TrxA/TrxB.</text>
</comment>
<comment type="cofactor">
    <cofactor evidence="1">
        <name>Fe cation</name>
        <dbReference type="ChEBI" id="CHEBI:24875"/>
    </cofactor>
    <text evidence="1">Binds 2 iron ions per dimer. The dimer may bind additional iron ions.</text>
</comment>
<comment type="subunit">
    <text evidence="1">Homodimer; may form tetramers and higher multimers.</text>
</comment>
<comment type="similarity">
    <text evidence="1">Belongs to the HesB/IscA family.</text>
</comment>
<sequence>MSITLSDSAAARVNTFLANRGKGFGLRLGVRTSGCSGMAYVLEFVDEPTAEDTVFEDKGVKVVVDGKSLQFLDGTQLDFVKEGLNEGFKFSNPNVKDECGCGESFHV</sequence>
<name>ISCA_SALAR</name>
<feature type="chain" id="PRO_1000087430" description="Iron-binding protein IscA">
    <location>
        <begin position="1"/>
        <end position="107"/>
    </location>
</feature>
<feature type="binding site" evidence="1">
    <location>
        <position position="35"/>
    </location>
    <ligand>
        <name>Fe cation</name>
        <dbReference type="ChEBI" id="CHEBI:24875"/>
    </ligand>
</feature>
<feature type="binding site" evidence="1">
    <location>
        <position position="99"/>
    </location>
    <ligand>
        <name>Fe cation</name>
        <dbReference type="ChEBI" id="CHEBI:24875"/>
    </ligand>
</feature>
<feature type="binding site" evidence="1">
    <location>
        <position position="101"/>
    </location>
    <ligand>
        <name>Fe cation</name>
        <dbReference type="ChEBI" id="CHEBI:24875"/>
    </ligand>
</feature>
<proteinExistence type="inferred from homology"/>
<evidence type="ECO:0000255" key="1">
    <source>
        <dbReference type="HAMAP-Rule" id="MF_01429"/>
    </source>
</evidence>
<protein>
    <recommendedName>
        <fullName evidence="1">Iron-binding protein IscA</fullName>
    </recommendedName>
    <alternativeName>
        <fullName evidence="1">Iron-sulfur cluster assembly protein</fullName>
    </alternativeName>
</protein>
<gene>
    <name evidence="1" type="primary">iscA</name>
    <name type="ordered locus">SARI_00335</name>
</gene>
<keyword id="KW-0408">Iron</keyword>
<keyword id="KW-0479">Metal-binding</keyword>
<keyword id="KW-1185">Reference proteome</keyword>
<reference key="1">
    <citation type="submission" date="2007-11" db="EMBL/GenBank/DDBJ databases">
        <authorList>
            <consortium name="The Salmonella enterica serovar Arizonae Genome Sequencing Project"/>
            <person name="McClelland M."/>
            <person name="Sanderson E.K."/>
            <person name="Porwollik S."/>
            <person name="Spieth J."/>
            <person name="Clifton W.S."/>
            <person name="Fulton R."/>
            <person name="Chunyan W."/>
            <person name="Wollam A."/>
            <person name="Shah N."/>
            <person name="Pepin K."/>
            <person name="Bhonagiri V."/>
            <person name="Nash W."/>
            <person name="Johnson M."/>
            <person name="Thiruvilangam P."/>
            <person name="Wilson R."/>
        </authorList>
    </citation>
    <scope>NUCLEOTIDE SEQUENCE [LARGE SCALE GENOMIC DNA]</scope>
    <source>
        <strain>ATCC BAA-731 / CDC346-86 / RSK2980</strain>
    </source>
</reference>